<proteinExistence type="inferred from homology"/>
<reference key="1">
    <citation type="journal article" date="2006" name="Science">
        <title>Genomic islands and the ecology and evolution of Prochlorococcus.</title>
        <authorList>
            <person name="Coleman M.L."/>
            <person name="Sullivan M.B."/>
            <person name="Martiny A.C."/>
            <person name="Steglich C."/>
            <person name="Barry K."/>
            <person name="Delong E.F."/>
            <person name="Chisholm S.W."/>
        </authorList>
    </citation>
    <scope>NUCLEOTIDE SEQUENCE [LARGE SCALE GENOMIC DNA]</scope>
    <source>
        <strain>MIT 9312</strain>
    </source>
</reference>
<gene>
    <name evidence="1" type="primary">rimM</name>
    <name type="ordered locus">PMT9312_1698</name>
</gene>
<evidence type="ECO:0000255" key="1">
    <source>
        <dbReference type="HAMAP-Rule" id="MF_00014"/>
    </source>
</evidence>
<feature type="chain" id="PRO_1000001213" description="Ribosome maturation factor RimM">
    <location>
        <begin position="1"/>
        <end position="179"/>
    </location>
</feature>
<feature type="domain" description="PRC barrel" evidence="1">
    <location>
        <begin position="100"/>
        <end position="176"/>
    </location>
</feature>
<sequence>MINNNKWLVVGLITSCHGINGQLKVKSLSDFEERFLKPGIRWLQKENEPPSKIELTSGFKQPGKETFIIKLQGINNRNQAERLKKCKILVKTNKLPKLKKEEFHLLELINLEVKTLENEELKIIGKVINLENEKNNLLVVELFKNKKKVLIPFVKEIVPLVDIKNNFLIINPPNGLLDL</sequence>
<organism>
    <name type="scientific">Prochlorococcus marinus (strain MIT 9312)</name>
    <dbReference type="NCBI Taxonomy" id="74546"/>
    <lineage>
        <taxon>Bacteria</taxon>
        <taxon>Bacillati</taxon>
        <taxon>Cyanobacteriota</taxon>
        <taxon>Cyanophyceae</taxon>
        <taxon>Synechococcales</taxon>
        <taxon>Prochlorococcaceae</taxon>
        <taxon>Prochlorococcus</taxon>
    </lineage>
</organism>
<accession>Q318D6</accession>
<keyword id="KW-0143">Chaperone</keyword>
<keyword id="KW-0963">Cytoplasm</keyword>
<keyword id="KW-0690">Ribosome biogenesis</keyword>
<keyword id="KW-0698">rRNA processing</keyword>
<protein>
    <recommendedName>
        <fullName evidence="1">Ribosome maturation factor RimM</fullName>
    </recommendedName>
</protein>
<name>RIMM_PROM9</name>
<comment type="function">
    <text evidence="1">An accessory protein needed during the final step in the assembly of 30S ribosomal subunit, possibly for assembly of the head region. Essential for efficient processing of 16S rRNA. May be needed both before and after RbfA during the maturation of 16S rRNA. It has affinity for free ribosomal 30S subunits but not for 70S ribosomes.</text>
</comment>
<comment type="subunit">
    <text evidence="1">Binds ribosomal protein uS19.</text>
</comment>
<comment type="subcellular location">
    <subcellularLocation>
        <location evidence="1">Cytoplasm</location>
    </subcellularLocation>
</comment>
<comment type="domain">
    <text evidence="1">The PRC barrel domain binds ribosomal protein uS19.</text>
</comment>
<comment type="similarity">
    <text evidence="1">Belongs to the RimM family.</text>
</comment>
<dbReference type="EMBL" id="CP000111">
    <property type="protein sequence ID" value="ABB50759.1"/>
    <property type="molecule type" value="Genomic_DNA"/>
</dbReference>
<dbReference type="RefSeq" id="WP_011377240.1">
    <property type="nucleotide sequence ID" value="NC_007577.1"/>
</dbReference>
<dbReference type="SMR" id="Q318D6"/>
<dbReference type="STRING" id="74546.PMT9312_1698"/>
<dbReference type="KEGG" id="pmi:PMT9312_1698"/>
<dbReference type="eggNOG" id="COG0806">
    <property type="taxonomic scope" value="Bacteria"/>
</dbReference>
<dbReference type="HOGENOM" id="CLU_077636_3_0_3"/>
<dbReference type="OrthoDB" id="9810331at2"/>
<dbReference type="Proteomes" id="UP000002715">
    <property type="component" value="Chromosome"/>
</dbReference>
<dbReference type="GO" id="GO:0005737">
    <property type="term" value="C:cytoplasm"/>
    <property type="evidence" value="ECO:0007669"/>
    <property type="project" value="UniProtKB-SubCell"/>
</dbReference>
<dbReference type="GO" id="GO:0005840">
    <property type="term" value="C:ribosome"/>
    <property type="evidence" value="ECO:0007669"/>
    <property type="project" value="InterPro"/>
</dbReference>
<dbReference type="GO" id="GO:0043022">
    <property type="term" value="F:ribosome binding"/>
    <property type="evidence" value="ECO:0007669"/>
    <property type="project" value="InterPro"/>
</dbReference>
<dbReference type="GO" id="GO:0042274">
    <property type="term" value="P:ribosomal small subunit biogenesis"/>
    <property type="evidence" value="ECO:0007669"/>
    <property type="project" value="UniProtKB-UniRule"/>
</dbReference>
<dbReference type="GO" id="GO:0006364">
    <property type="term" value="P:rRNA processing"/>
    <property type="evidence" value="ECO:0007669"/>
    <property type="project" value="UniProtKB-UniRule"/>
</dbReference>
<dbReference type="Gene3D" id="2.30.30.240">
    <property type="entry name" value="PRC-barrel domain"/>
    <property type="match status" value="1"/>
</dbReference>
<dbReference type="Gene3D" id="2.40.30.60">
    <property type="entry name" value="RimM"/>
    <property type="match status" value="1"/>
</dbReference>
<dbReference type="HAMAP" id="MF_00014">
    <property type="entry name" value="Ribosome_mat_RimM"/>
    <property type="match status" value="1"/>
</dbReference>
<dbReference type="InterPro" id="IPR011033">
    <property type="entry name" value="PRC_barrel-like_sf"/>
</dbReference>
<dbReference type="InterPro" id="IPR056792">
    <property type="entry name" value="PRC_RimM"/>
</dbReference>
<dbReference type="InterPro" id="IPR011961">
    <property type="entry name" value="RimM"/>
</dbReference>
<dbReference type="InterPro" id="IPR002676">
    <property type="entry name" value="RimM_N"/>
</dbReference>
<dbReference type="InterPro" id="IPR036976">
    <property type="entry name" value="RimM_N_sf"/>
</dbReference>
<dbReference type="InterPro" id="IPR009000">
    <property type="entry name" value="Transl_B-barrel_sf"/>
</dbReference>
<dbReference type="NCBIfam" id="TIGR02273">
    <property type="entry name" value="16S_RimM"/>
    <property type="match status" value="1"/>
</dbReference>
<dbReference type="PANTHER" id="PTHR33692">
    <property type="entry name" value="RIBOSOME MATURATION FACTOR RIMM"/>
    <property type="match status" value="1"/>
</dbReference>
<dbReference type="PANTHER" id="PTHR33692:SF1">
    <property type="entry name" value="RIBOSOME MATURATION FACTOR RIMM"/>
    <property type="match status" value="1"/>
</dbReference>
<dbReference type="Pfam" id="PF24986">
    <property type="entry name" value="PRC_RimM"/>
    <property type="match status" value="1"/>
</dbReference>
<dbReference type="Pfam" id="PF01782">
    <property type="entry name" value="RimM"/>
    <property type="match status" value="1"/>
</dbReference>
<dbReference type="SUPFAM" id="SSF50346">
    <property type="entry name" value="PRC-barrel domain"/>
    <property type="match status" value="1"/>
</dbReference>
<dbReference type="SUPFAM" id="SSF50447">
    <property type="entry name" value="Translation proteins"/>
    <property type="match status" value="1"/>
</dbReference>